<comment type="function">
    <text evidence="2">Receptor required for the peroxisomal import of proteins containing a C-terminal PTS2-type peroxisomal targeting signal, such as 3-oxoacyl-CoA thiolase. Specifically binds to cargo proteins containing a PTS2 peroxisomal targeting signal in the cytosol. Cargo protein-binding triggers interaction with PEX21 and formation of a ternary complex composed of PEX21 and PEX7 along with PTS2-containing cargo proteins, which is tranlocated into peroxisomes by passing through the PEX13-PEX14 docking complex.</text>
</comment>
<comment type="subunit">
    <text evidence="1">Interacts with PEX21.</text>
</comment>
<comment type="subcellular location">
    <subcellularLocation>
        <location evidence="3">Cytoplasm</location>
        <location evidence="3">Cytosol</location>
    </subcellularLocation>
    <subcellularLocation>
        <location evidence="2">Peroxisome matrix</location>
    </subcellularLocation>
</comment>
<comment type="similarity">
    <text evidence="4">Belongs to the WD repeat peroxin-7 family.</text>
</comment>
<comment type="sequence caution" evidence="4">
    <conflict type="erroneous initiation">
        <sequence resource="EMBL-CDS" id="BAA13809"/>
    </conflict>
</comment>
<feature type="chain" id="PRO_0000051119" description="Peroxisomal targeting signal 2 receptor">
    <location>
        <begin position="1"/>
        <end position="308"/>
    </location>
</feature>
<feature type="repeat" description="WD 1">
    <location>
        <begin position="57"/>
        <end position="88"/>
    </location>
</feature>
<feature type="repeat" description="WD 2">
    <location>
        <begin position="101"/>
        <end position="132"/>
    </location>
</feature>
<feature type="repeat" description="WD 3">
    <location>
        <begin position="145"/>
        <end position="176"/>
    </location>
</feature>
<feature type="repeat" description="WD 4">
    <location>
        <begin position="187"/>
        <end position="218"/>
    </location>
</feature>
<feature type="repeat" description="WD 5">
    <location>
        <begin position="231"/>
        <end position="262"/>
    </location>
</feature>
<feature type="repeat" description="WD 6">
    <location>
        <begin position="274"/>
        <end position="306"/>
    </location>
</feature>
<sequence>MLSLRTPGFQGESVQFSPLVENKIAVAAVTHYGLGGSGRLYIHDVTPKGIQVCQHYDVEDSLFGVRWSQNCENQVYACCGDGSLRLFDLTMPSKPIHKWKEHKAEIVAIDTNTVDRRIVVTGSWDGTIKLWLGNLPNSVQTLNNGSNSRILTVATHYSSPNLLGYTSSDGLCKFWDFRSSDKFMSIEIPNQITCMNWSKSNHRMVYTADNNNLVYCYDIANLKTPLSVLSGHQLAVRSIKSSNSAHDLLATASYDMTSRIFDPEQHSCIRKVDLHSEFVRDVDWSDFGDGSWIASVGWDESLYIWNAF</sequence>
<protein>
    <recommendedName>
        <fullName>Peroxisomal targeting signal 2 receptor</fullName>
        <shortName>PTS2 receptor</shortName>
    </recommendedName>
    <alternativeName>
        <fullName>Peroxin-7</fullName>
    </alternativeName>
</protein>
<organism>
    <name type="scientific">Schizosaccharomyces pombe (strain 972 / ATCC 24843)</name>
    <name type="common">Fission yeast</name>
    <dbReference type="NCBI Taxonomy" id="284812"/>
    <lineage>
        <taxon>Eukaryota</taxon>
        <taxon>Fungi</taxon>
        <taxon>Dikarya</taxon>
        <taxon>Ascomycota</taxon>
        <taxon>Taphrinomycotina</taxon>
        <taxon>Schizosaccharomycetes</taxon>
        <taxon>Schizosaccharomycetales</taxon>
        <taxon>Schizosaccharomycetaceae</taxon>
        <taxon>Schizosaccharomyces</taxon>
    </lineage>
</organism>
<reference key="1">
    <citation type="journal article" date="1997" name="DNA Res.">
        <title>Identification of open reading frames in Schizosaccharomyces pombe cDNAs.</title>
        <authorList>
            <person name="Yoshioka S."/>
            <person name="Kato K."/>
            <person name="Nakai K."/>
            <person name="Okayama H."/>
            <person name="Nojima H."/>
        </authorList>
    </citation>
    <scope>NUCLEOTIDE SEQUENCE [LARGE SCALE MRNA]</scope>
    <source>
        <strain>PR745</strain>
    </source>
</reference>
<reference key="2">
    <citation type="journal article" date="2002" name="Nature">
        <title>The genome sequence of Schizosaccharomyces pombe.</title>
        <authorList>
            <person name="Wood V."/>
            <person name="Gwilliam R."/>
            <person name="Rajandream M.A."/>
            <person name="Lyne M.H."/>
            <person name="Lyne R."/>
            <person name="Stewart A."/>
            <person name="Sgouros J.G."/>
            <person name="Peat N."/>
            <person name="Hayles J."/>
            <person name="Baker S.G."/>
            <person name="Basham D."/>
            <person name="Bowman S."/>
            <person name="Brooks K."/>
            <person name="Brown D."/>
            <person name="Brown S."/>
            <person name="Chillingworth T."/>
            <person name="Churcher C.M."/>
            <person name="Collins M."/>
            <person name="Connor R."/>
            <person name="Cronin A."/>
            <person name="Davis P."/>
            <person name="Feltwell T."/>
            <person name="Fraser A."/>
            <person name="Gentles S."/>
            <person name="Goble A."/>
            <person name="Hamlin N."/>
            <person name="Harris D.E."/>
            <person name="Hidalgo J."/>
            <person name="Hodgson G."/>
            <person name="Holroyd S."/>
            <person name="Hornsby T."/>
            <person name="Howarth S."/>
            <person name="Huckle E.J."/>
            <person name="Hunt S."/>
            <person name="Jagels K."/>
            <person name="James K.D."/>
            <person name="Jones L."/>
            <person name="Jones M."/>
            <person name="Leather S."/>
            <person name="McDonald S."/>
            <person name="McLean J."/>
            <person name="Mooney P."/>
            <person name="Moule S."/>
            <person name="Mungall K.L."/>
            <person name="Murphy L.D."/>
            <person name="Niblett D."/>
            <person name="Odell C."/>
            <person name="Oliver K."/>
            <person name="O'Neil S."/>
            <person name="Pearson D."/>
            <person name="Quail M.A."/>
            <person name="Rabbinowitsch E."/>
            <person name="Rutherford K.M."/>
            <person name="Rutter S."/>
            <person name="Saunders D."/>
            <person name="Seeger K."/>
            <person name="Sharp S."/>
            <person name="Skelton J."/>
            <person name="Simmonds M.N."/>
            <person name="Squares R."/>
            <person name="Squares S."/>
            <person name="Stevens K."/>
            <person name="Taylor K."/>
            <person name="Taylor R.G."/>
            <person name="Tivey A."/>
            <person name="Walsh S.V."/>
            <person name="Warren T."/>
            <person name="Whitehead S."/>
            <person name="Woodward J.R."/>
            <person name="Volckaert G."/>
            <person name="Aert R."/>
            <person name="Robben J."/>
            <person name="Grymonprez B."/>
            <person name="Weltjens I."/>
            <person name="Vanstreels E."/>
            <person name="Rieger M."/>
            <person name="Schaefer M."/>
            <person name="Mueller-Auer S."/>
            <person name="Gabel C."/>
            <person name="Fuchs M."/>
            <person name="Duesterhoeft A."/>
            <person name="Fritzc C."/>
            <person name="Holzer E."/>
            <person name="Moestl D."/>
            <person name="Hilbert H."/>
            <person name="Borzym K."/>
            <person name="Langer I."/>
            <person name="Beck A."/>
            <person name="Lehrach H."/>
            <person name="Reinhardt R."/>
            <person name="Pohl T.M."/>
            <person name="Eger P."/>
            <person name="Zimmermann W."/>
            <person name="Wedler H."/>
            <person name="Wambutt R."/>
            <person name="Purnelle B."/>
            <person name="Goffeau A."/>
            <person name="Cadieu E."/>
            <person name="Dreano S."/>
            <person name="Gloux S."/>
            <person name="Lelaure V."/>
            <person name="Mottier S."/>
            <person name="Galibert F."/>
            <person name="Aves S.J."/>
            <person name="Xiang Z."/>
            <person name="Hunt C."/>
            <person name="Moore K."/>
            <person name="Hurst S.M."/>
            <person name="Lucas M."/>
            <person name="Rochet M."/>
            <person name="Gaillardin C."/>
            <person name="Tallada V.A."/>
            <person name="Garzon A."/>
            <person name="Thode G."/>
            <person name="Daga R.R."/>
            <person name="Cruzado L."/>
            <person name="Jimenez J."/>
            <person name="Sanchez M."/>
            <person name="del Rey F."/>
            <person name="Benito J."/>
            <person name="Dominguez A."/>
            <person name="Revuelta J.L."/>
            <person name="Moreno S."/>
            <person name="Armstrong J."/>
            <person name="Forsburg S.L."/>
            <person name="Cerutti L."/>
            <person name="Lowe T."/>
            <person name="McCombie W.R."/>
            <person name="Paulsen I."/>
            <person name="Potashkin J."/>
            <person name="Shpakovski G.V."/>
            <person name="Ussery D."/>
            <person name="Barrell B.G."/>
            <person name="Nurse P."/>
        </authorList>
    </citation>
    <scope>NUCLEOTIDE SEQUENCE [LARGE SCALE GENOMIC DNA]</scope>
    <source>
        <strain>972 / ATCC 24843</strain>
    </source>
</reference>
<reference key="3">
    <citation type="journal article" date="2006" name="Nat. Biotechnol.">
        <title>ORFeome cloning and global analysis of protein localization in the fission yeast Schizosaccharomyces pombe.</title>
        <authorList>
            <person name="Matsuyama A."/>
            <person name="Arai R."/>
            <person name="Yashiroda Y."/>
            <person name="Shirai A."/>
            <person name="Kamata A."/>
            <person name="Sekido S."/>
            <person name="Kobayashi Y."/>
            <person name="Hashimoto A."/>
            <person name="Hamamoto M."/>
            <person name="Hiraoka Y."/>
            <person name="Horinouchi S."/>
            <person name="Yoshida M."/>
        </authorList>
    </citation>
    <scope>SUBCELLULAR LOCATION [LARGE SCALE ANALYSIS]</scope>
</reference>
<dbReference type="EMBL" id="D89147">
    <property type="protein sequence ID" value="BAA13809.1"/>
    <property type="status" value="ALT_INIT"/>
    <property type="molecule type" value="mRNA"/>
</dbReference>
<dbReference type="EMBL" id="CU329670">
    <property type="protein sequence ID" value="CAO77648.1"/>
    <property type="molecule type" value="Genomic_DNA"/>
</dbReference>
<dbReference type="PIR" id="T42423">
    <property type="entry name" value="T42423"/>
</dbReference>
<dbReference type="PIR" id="T50123">
    <property type="entry name" value="T50123"/>
</dbReference>
<dbReference type="RefSeq" id="XP_001713109.1">
    <property type="nucleotide sequence ID" value="XM_001713057.2"/>
</dbReference>
<dbReference type="SMR" id="P78798"/>
<dbReference type="BioGRID" id="858100">
    <property type="interactions" value="3"/>
</dbReference>
<dbReference type="FunCoup" id="P78798">
    <property type="interactions" value="79"/>
</dbReference>
<dbReference type="STRING" id="284812.P78798"/>
<dbReference type="iPTMnet" id="P78798"/>
<dbReference type="SwissPalm" id="P78798"/>
<dbReference type="PaxDb" id="4896-SPAC17D4.01.1"/>
<dbReference type="EnsemblFungi" id="SPAC17D4.01.1">
    <property type="protein sequence ID" value="SPAC17D4.01.1:pep"/>
    <property type="gene ID" value="SPAC17D4.01"/>
</dbReference>
<dbReference type="PomBase" id="SPAC17D4.01">
    <property type="gene designation" value="pex7"/>
</dbReference>
<dbReference type="VEuPathDB" id="FungiDB:SPAC17D4.01"/>
<dbReference type="eggNOG" id="KOG0277">
    <property type="taxonomic scope" value="Eukaryota"/>
</dbReference>
<dbReference type="HOGENOM" id="CLU_046581_1_0_1"/>
<dbReference type="InParanoid" id="P78798"/>
<dbReference type="OMA" id="FAVHWNL"/>
<dbReference type="PhylomeDB" id="P78798"/>
<dbReference type="Reactome" id="R-SPO-9033241">
    <property type="pathway name" value="Peroxisomal protein import"/>
</dbReference>
<dbReference type="PRO" id="PR:P78798"/>
<dbReference type="Proteomes" id="UP000002485">
    <property type="component" value="Chromosome I"/>
</dbReference>
<dbReference type="GO" id="GO:0005829">
    <property type="term" value="C:cytosol"/>
    <property type="evidence" value="ECO:0007005"/>
    <property type="project" value="PomBase"/>
</dbReference>
<dbReference type="GO" id="GO:0005634">
    <property type="term" value="C:nucleus"/>
    <property type="evidence" value="ECO:0007005"/>
    <property type="project" value="PomBase"/>
</dbReference>
<dbReference type="GO" id="GO:0005782">
    <property type="term" value="C:peroxisomal matrix"/>
    <property type="evidence" value="ECO:0000318"/>
    <property type="project" value="GO_Central"/>
</dbReference>
<dbReference type="GO" id="GO:0005053">
    <property type="term" value="F:peroxisome matrix targeting signal-2 binding"/>
    <property type="evidence" value="ECO:0000318"/>
    <property type="project" value="GO_Central"/>
</dbReference>
<dbReference type="GO" id="GO:0016558">
    <property type="term" value="P:protein import into peroxisome matrix"/>
    <property type="evidence" value="ECO:0000318"/>
    <property type="project" value="GO_Central"/>
</dbReference>
<dbReference type="GO" id="GO:0006625">
    <property type="term" value="P:protein targeting to peroxisome"/>
    <property type="evidence" value="ECO:0000266"/>
    <property type="project" value="PomBase"/>
</dbReference>
<dbReference type="Gene3D" id="2.130.10.10">
    <property type="entry name" value="YVTN repeat-like/Quinoprotein amine dehydrogenase"/>
    <property type="match status" value="1"/>
</dbReference>
<dbReference type="InterPro" id="IPR044536">
    <property type="entry name" value="PEX7"/>
</dbReference>
<dbReference type="InterPro" id="IPR015943">
    <property type="entry name" value="WD40/YVTN_repeat-like_dom_sf"/>
</dbReference>
<dbReference type="InterPro" id="IPR019775">
    <property type="entry name" value="WD40_repeat_CS"/>
</dbReference>
<dbReference type="InterPro" id="IPR036322">
    <property type="entry name" value="WD40_repeat_dom_sf"/>
</dbReference>
<dbReference type="InterPro" id="IPR001680">
    <property type="entry name" value="WD40_rpt"/>
</dbReference>
<dbReference type="PANTHER" id="PTHR46027">
    <property type="entry name" value="PEROXISOMAL TARGETING SIGNAL 2 RECEPTOR"/>
    <property type="match status" value="1"/>
</dbReference>
<dbReference type="PANTHER" id="PTHR46027:SF1">
    <property type="entry name" value="PEROXISOMAL TARGETING SIGNAL 2 RECEPTOR"/>
    <property type="match status" value="1"/>
</dbReference>
<dbReference type="Pfam" id="PF00400">
    <property type="entry name" value="WD40"/>
    <property type="match status" value="4"/>
</dbReference>
<dbReference type="SMART" id="SM00320">
    <property type="entry name" value="WD40"/>
    <property type="match status" value="6"/>
</dbReference>
<dbReference type="SUPFAM" id="SSF50978">
    <property type="entry name" value="WD40 repeat-like"/>
    <property type="match status" value="1"/>
</dbReference>
<dbReference type="PROSITE" id="PS00678">
    <property type="entry name" value="WD_REPEATS_1"/>
    <property type="match status" value="1"/>
</dbReference>
<dbReference type="PROSITE" id="PS50082">
    <property type="entry name" value="WD_REPEATS_2"/>
    <property type="match status" value="2"/>
</dbReference>
<dbReference type="PROSITE" id="PS50294">
    <property type="entry name" value="WD_REPEATS_REGION"/>
    <property type="match status" value="1"/>
</dbReference>
<keyword id="KW-0963">Cytoplasm</keyword>
<keyword id="KW-0576">Peroxisome</keyword>
<keyword id="KW-0653">Protein transport</keyword>
<keyword id="KW-1185">Reference proteome</keyword>
<keyword id="KW-0677">Repeat</keyword>
<keyword id="KW-0813">Transport</keyword>
<keyword id="KW-0853">WD repeat</keyword>
<proteinExistence type="evidence at transcript level"/>
<gene>
    <name type="primary">pex7</name>
    <name type="ORF">SPAC17D4.01</name>
    <name type="ORF">SPAC1834.12</name>
    <name type="ORF">SPAP17D4.01</name>
</gene>
<accession>P78798</accession>
<accession>A6X979</accession>
<accession>Q9HGQ4</accession>
<accession>Q9P7Q3</accession>
<evidence type="ECO:0000250" key="1">
    <source>
        <dbReference type="UniProtKB" id="O00628"/>
    </source>
</evidence>
<evidence type="ECO:0000250" key="2">
    <source>
        <dbReference type="UniProtKB" id="P39108"/>
    </source>
</evidence>
<evidence type="ECO:0000269" key="3">
    <source>
    </source>
</evidence>
<evidence type="ECO:0000305" key="4"/>
<name>PEX7_SCHPO</name>